<comment type="function">
    <text evidence="1">Catalyzes the sequential condensation of isopentenyl diphosphate (IPP) with (2E,6E)-farnesyl diphosphate (E,E-FPP) to yield (2Z,6Z,10Z,14Z,18Z,22Z,26Z,30Z,34E,38E)-undecaprenyl diphosphate (di-trans,octa-cis-UPP). UPP is the precursor of glycosyl carrier lipid in the biosynthesis of bacterial cell wall polysaccharide components such as peptidoglycan and lipopolysaccharide.</text>
</comment>
<comment type="catalytic activity">
    <reaction evidence="1">
        <text>8 isopentenyl diphosphate + (2E,6E)-farnesyl diphosphate = di-trans,octa-cis-undecaprenyl diphosphate + 8 diphosphate</text>
        <dbReference type="Rhea" id="RHEA:27551"/>
        <dbReference type="ChEBI" id="CHEBI:33019"/>
        <dbReference type="ChEBI" id="CHEBI:58405"/>
        <dbReference type="ChEBI" id="CHEBI:128769"/>
        <dbReference type="ChEBI" id="CHEBI:175763"/>
        <dbReference type="EC" id="2.5.1.31"/>
    </reaction>
</comment>
<comment type="cofactor">
    <cofactor evidence="1">
        <name>Mg(2+)</name>
        <dbReference type="ChEBI" id="CHEBI:18420"/>
    </cofactor>
    <text evidence="1">Binds 2 magnesium ions per subunit.</text>
</comment>
<comment type="subunit">
    <text evidence="1">Homodimer.</text>
</comment>
<comment type="similarity">
    <text evidence="1">Belongs to the UPP synthase family.</text>
</comment>
<gene>
    <name evidence="1" type="primary">uppS</name>
    <name type="ordered locus">ECA1036</name>
</gene>
<name>UPPS_PECAS</name>
<feature type="chain" id="PRO_0000123613" description="Ditrans,polycis-undecaprenyl-diphosphate synthase ((2E,6E)-farnesyl-diphosphate specific)">
    <location>
        <begin position="1"/>
        <end position="253"/>
    </location>
</feature>
<feature type="active site" evidence="1">
    <location>
        <position position="25"/>
    </location>
</feature>
<feature type="active site" description="Proton acceptor" evidence="1">
    <location>
        <position position="73"/>
    </location>
</feature>
<feature type="binding site" evidence="1">
    <location>
        <position position="25"/>
    </location>
    <ligand>
        <name>Mg(2+)</name>
        <dbReference type="ChEBI" id="CHEBI:18420"/>
    </ligand>
</feature>
<feature type="binding site" evidence="1">
    <location>
        <begin position="26"/>
        <end position="29"/>
    </location>
    <ligand>
        <name>substrate</name>
    </ligand>
</feature>
<feature type="binding site" evidence="1">
    <location>
        <position position="30"/>
    </location>
    <ligand>
        <name>substrate</name>
    </ligand>
</feature>
<feature type="binding site" evidence="1">
    <location>
        <position position="38"/>
    </location>
    <ligand>
        <name>substrate</name>
    </ligand>
</feature>
<feature type="binding site" evidence="1">
    <location>
        <position position="42"/>
    </location>
    <ligand>
        <name>substrate</name>
    </ligand>
</feature>
<feature type="binding site" evidence="1">
    <location>
        <begin position="70"/>
        <end position="72"/>
    </location>
    <ligand>
        <name>substrate</name>
    </ligand>
</feature>
<feature type="binding site" evidence="1">
    <location>
        <position position="74"/>
    </location>
    <ligand>
        <name>substrate</name>
    </ligand>
</feature>
<feature type="binding site" evidence="1">
    <location>
        <position position="76"/>
    </location>
    <ligand>
        <name>substrate</name>
    </ligand>
</feature>
<feature type="binding site" evidence="1">
    <location>
        <position position="193"/>
    </location>
    <ligand>
        <name>substrate</name>
    </ligand>
</feature>
<feature type="binding site" evidence="1">
    <location>
        <position position="198"/>
    </location>
    <ligand>
        <name>Mg(2+)</name>
        <dbReference type="ChEBI" id="CHEBI:18420"/>
    </ligand>
</feature>
<feature type="binding site" evidence="1">
    <location>
        <begin position="199"/>
        <end position="201"/>
    </location>
    <ligand>
        <name>substrate</name>
    </ligand>
</feature>
<feature type="binding site" evidence="1">
    <location>
        <position position="212"/>
    </location>
    <ligand>
        <name>Mg(2+)</name>
        <dbReference type="ChEBI" id="CHEBI:18420"/>
    </ligand>
</feature>
<accession>Q6D8D8</accession>
<organism>
    <name type="scientific">Pectobacterium atrosepticum (strain SCRI 1043 / ATCC BAA-672)</name>
    <name type="common">Erwinia carotovora subsp. atroseptica</name>
    <dbReference type="NCBI Taxonomy" id="218491"/>
    <lineage>
        <taxon>Bacteria</taxon>
        <taxon>Pseudomonadati</taxon>
        <taxon>Pseudomonadota</taxon>
        <taxon>Gammaproteobacteria</taxon>
        <taxon>Enterobacterales</taxon>
        <taxon>Pectobacteriaceae</taxon>
        <taxon>Pectobacterium</taxon>
    </lineage>
</organism>
<sequence>MPSDNQKNTNDLPLAGPRHVAIIMDGNGRWAKSRGKMRIFGHQAGVKAVRRSVSFAVNHGLDALTLYAFSSENWNRPAQEVSALMELFVRALDSEVKSLHKHNVRLRVIGDIGRFSPRLQERIRRSEVLTEKNQGLTLNIAANYGGRWDIIQGVRQLAEQVQEGILRPDSINEASLCQYICLNDLAPVDLVIRTGGEHRISNFLLWQIAYAELYFTDVLWPDFDEQVFEGALNAFAQRERRFGGTTPIDADAS</sequence>
<keyword id="KW-0133">Cell shape</keyword>
<keyword id="KW-0961">Cell wall biogenesis/degradation</keyword>
<keyword id="KW-0460">Magnesium</keyword>
<keyword id="KW-0479">Metal-binding</keyword>
<keyword id="KW-0573">Peptidoglycan synthesis</keyword>
<keyword id="KW-1185">Reference proteome</keyword>
<keyword id="KW-0808">Transferase</keyword>
<reference key="1">
    <citation type="journal article" date="2004" name="Proc. Natl. Acad. Sci. U.S.A.">
        <title>Genome sequence of the enterobacterial phytopathogen Erwinia carotovora subsp. atroseptica and characterization of virulence factors.</title>
        <authorList>
            <person name="Bell K.S."/>
            <person name="Sebaihia M."/>
            <person name="Pritchard L."/>
            <person name="Holden M.T.G."/>
            <person name="Hyman L.J."/>
            <person name="Holeva M.C."/>
            <person name="Thomson N.R."/>
            <person name="Bentley S.D."/>
            <person name="Churcher L.J.C."/>
            <person name="Mungall K."/>
            <person name="Atkin R."/>
            <person name="Bason N."/>
            <person name="Brooks K."/>
            <person name="Chillingworth T."/>
            <person name="Clark K."/>
            <person name="Doggett J."/>
            <person name="Fraser A."/>
            <person name="Hance Z."/>
            <person name="Hauser H."/>
            <person name="Jagels K."/>
            <person name="Moule S."/>
            <person name="Norbertczak H."/>
            <person name="Ormond D."/>
            <person name="Price C."/>
            <person name="Quail M.A."/>
            <person name="Sanders M."/>
            <person name="Walker D."/>
            <person name="Whitehead S."/>
            <person name="Salmond G.P.C."/>
            <person name="Birch P.R.J."/>
            <person name="Parkhill J."/>
            <person name="Toth I.K."/>
        </authorList>
    </citation>
    <scope>NUCLEOTIDE SEQUENCE [LARGE SCALE GENOMIC DNA]</scope>
    <source>
        <strain>SCRI 1043 / ATCC BAA-672</strain>
    </source>
</reference>
<protein>
    <recommendedName>
        <fullName evidence="1">Ditrans,polycis-undecaprenyl-diphosphate synthase ((2E,6E)-farnesyl-diphosphate specific)</fullName>
        <ecNumber evidence="1">2.5.1.31</ecNumber>
    </recommendedName>
    <alternativeName>
        <fullName evidence="1">Ditrans,polycis-undecaprenylcistransferase</fullName>
    </alternativeName>
    <alternativeName>
        <fullName evidence="1">Undecaprenyl diphosphate synthase</fullName>
        <shortName evidence="1">UDS</shortName>
    </alternativeName>
    <alternativeName>
        <fullName evidence="1">Undecaprenyl pyrophosphate synthase</fullName>
        <shortName evidence="1">UPP synthase</shortName>
    </alternativeName>
</protein>
<proteinExistence type="inferred from homology"/>
<evidence type="ECO:0000255" key="1">
    <source>
        <dbReference type="HAMAP-Rule" id="MF_01139"/>
    </source>
</evidence>
<dbReference type="EC" id="2.5.1.31" evidence="1"/>
<dbReference type="EMBL" id="BX950851">
    <property type="protein sequence ID" value="CAG73947.1"/>
    <property type="molecule type" value="Genomic_DNA"/>
</dbReference>
<dbReference type="RefSeq" id="WP_011092634.1">
    <property type="nucleotide sequence ID" value="NC_004547.2"/>
</dbReference>
<dbReference type="SMR" id="Q6D8D8"/>
<dbReference type="STRING" id="218491.ECA1036"/>
<dbReference type="GeneID" id="57207865"/>
<dbReference type="KEGG" id="eca:ECA1036"/>
<dbReference type="PATRIC" id="fig|218491.5.peg.1044"/>
<dbReference type="eggNOG" id="COG0020">
    <property type="taxonomic scope" value="Bacteria"/>
</dbReference>
<dbReference type="HOGENOM" id="CLU_038505_1_1_6"/>
<dbReference type="OrthoDB" id="4191603at2"/>
<dbReference type="Proteomes" id="UP000007966">
    <property type="component" value="Chromosome"/>
</dbReference>
<dbReference type="GO" id="GO:0005829">
    <property type="term" value="C:cytosol"/>
    <property type="evidence" value="ECO:0007669"/>
    <property type="project" value="TreeGrafter"/>
</dbReference>
<dbReference type="GO" id="GO:0008834">
    <property type="term" value="F:ditrans,polycis-undecaprenyl-diphosphate synthase [(2E,6E)-farnesyl-diphosphate specific] activity"/>
    <property type="evidence" value="ECO:0007669"/>
    <property type="project" value="UniProtKB-UniRule"/>
</dbReference>
<dbReference type="GO" id="GO:0000287">
    <property type="term" value="F:magnesium ion binding"/>
    <property type="evidence" value="ECO:0007669"/>
    <property type="project" value="UniProtKB-UniRule"/>
</dbReference>
<dbReference type="GO" id="GO:0071555">
    <property type="term" value="P:cell wall organization"/>
    <property type="evidence" value="ECO:0007669"/>
    <property type="project" value="UniProtKB-KW"/>
</dbReference>
<dbReference type="GO" id="GO:0009252">
    <property type="term" value="P:peptidoglycan biosynthetic process"/>
    <property type="evidence" value="ECO:0007669"/>
    <property type="project" value="UniProtKB-UniRule"/>
</dbReference>
<dbReference type="GO" id="GO:0016094">
    <property type="term" value="P:polyprenol biosynthetic process"/>
    <property type="evidence" value="ECO:0007669"/>
    <property type="project" value="TreeGrafter"/>
</dbReference>
<dbReference type="GO" id="GO:0008360">
    <property type="term" value="P:regulation of cell shape"/>
    <property type="evidence" value="ECO:0007669"/>
    <property type="project" value="UniProtKB-KW"/>
</dbReference>
<dbReference type="CDD" id="cd00475">
    <property type="entry name" value="Cis_IPPS"/>
    <property type="match status" value="1"/>
</dbReference>
<dbReference type="FunFam" id="3.40.1180.10:FF:000001">
    <property type="entry name" value="(2E,6E)-farnesyl-diphosphate-specific ditrans,polycis-undecaprenyl-diphosphate synthase"/>
    <property type="match status" value="1"/>
</dbReference>
<dbReference type="Gene3D" id="3.40.1180.10">
    <property type="entry name" value="Decaprenyl diphosphate synthase-like"/>
    <property type="match status" value="1"/>
</dbReference>
<dbReference type="HAMAP" id="MF_01139">
    <property type="entry name" value="ISPT"/>
    <property type="match status" value="1"/>
</dbReference>
<dbReference type="InterPro" id="IPR001441">
    <property type="entry name" value="UPP_synth-like"/>
</dbReference>
<dbReference type="InterPro" id="IPR018520">
    <property type="entry name" value="UPP_synth-like_CS"/>
</dbReference>
<dbReference type="InterPro" id="IPR036424">
    <property type="entry name" value="UPP_synth-like_sf"/>
</dbReference>
<dbReference type="NCBIfam" id="NF007596">
    <property type="entry name" value="PRK10240.1"/>
    <property type="match status" value="1"/>
</dbReference>
<dbReference type="NCBIfam" id="TIGR00055">
    <property type="entry name" value="uppS"/>
    <property type="match status" value="1"/>
</dbReference>
<dbReference type="PANTHER" id="PTHR10291:SF0">
    <property type="entry name" value="DEHYDRODOLICHYL DIPHOSPHATE SYNTHASE 2"/>
    <property type="match status" value="1"/>
</dbReference>
<dbReference type="PANTHER" id="PTHR10291">
    <property type="entry name" value="DEHYDRODOLICHYL DIPHOSPHATE SYNTHASE FAMILY MEMBER"/>
    <property type="match status" value="1"/>
</dbReference>
<dbReference type="Pfam" id="PF01255">
    <property type="entry name" value="Prenyltransf"/>
    <property type="match status" value="1"/>
</dbReference>
<dbReference type="SUPFAM" id="SSF64005">
    <property type="entry name" value="Undecaprenyl diphosphate synthase"/>
    <property type="match status" value="1"/>
</dbReference>
<dbReference type="PROSITE" id="PS01066">
    <property type="entry name" value="UPP_SYNTHASE"/>
    <property type="match status" value="1"/>
</dbReference>